<dbReference type="EMBL" id="Y00113">
    <property type="protein sequence ID" value="CAA68292.1"/>
    <property type="status" value="ALT_SEQ"/>
    <property type="molecule type" value="Genomic_DNA"/>
</dbReference>
<dbReference type="EMBL" id="U16361">
    <property type="protein sequence ID" value="AAB59986.1"/>
    <property type="molecule type" value="Genomic_DNA"/>
</dbReference>
<dbReference type="EMBL" id="U29581">
    <property type="protein sequence ID" value="AAB40478.1"/>
    <property type="molecule type" value="Genomic_DNA"/>
</dbReference>
<dbReference type="EMBL" id="U00096">
    <property type="protein sequence ID" value="AAC75870.1"/>
    <property type="molecule type" value="Genomic_DNA"/>
</dbReference>
<dbReference type="EMBL" id="AP009048">
    <property type="protein sequence ID" value="BAE76900.1"/>
    <property type="molecule type" value="Genomic_DNA"/>
</dbReference>
<dbReference type="EMBL" id="AJ005726">
    <property type="protein sequence ID" value="CAB41510.1"/>
    <property type="molecule type" value="Genomic_DNA"/>
</dbReference>
<dbReference type="EMBL" id="AJ005727">
    <property type="protein sequence ID" value="CAB41511.1"/>
    <property type="molecule type" value="Genomic_DNA"/>
</dbReference>
<dbReference type="EMBL" id="AJ005728">
    <property type="protein sequence ID" value="CAB41512.1"/>
    <property type="molecule type" value="Genomic_DNA"/>
</dbReference>
<dbReference type="EMBL" id="AJ005729">
    <property type="protein sequence ID" value="CAB41513.1"/>
    <property type="molecule type" value="Genomic_DNA"/>
</dbReference>
<dbReference type="EMBL" id="AJ005730">
    <property type="protein sequence ID" value="CAB41514.1"/>
    <property type="molecule type" value="Genomic_DNA"/>
</dbReference>
<dbReference type="EMBL" id="AJ005731">
    <property type="protein sequence ID" value="CAB41515.1"/>
    <property type="molecule type" value="Genomic_DNA"/>
</dbReference>
<dbReference type="EMBL" id="AJ005732">
    <property type="protein sequence ID" value="CAB41516.1"/>
    <property type="molecule type" value="Genomic_DNA"/>
</dbReference>
<dbReference type="EMBL" id="AJ005733">
    <property type="protein sequence ID" value="CAB41517.1"/>
    <property type="molecule type" value="Genomic_DNA"/>
</dbReference>
<dbReference type="EMBL" id="AJ005734">
    <property type="protein sequence ID" value="CAB41518.1"/>
    <property type="molecule type" value="Genomic_DNA"/>
</dbReference>
<dbReference type="EMBL" id="AJ005735">
    <property type="protein sequence ID" value="CAB41519.1"/>
    <property type="molecule type" value="Genomic_DNA"/>
</dbReference>
<dbReference type="EMBL" id="AJ005736">
    <property type="protein sequence ID" value="CAB41520.1"/>
    <property type="molecule type" value="Genomic_DNA"/>
</dbReference>
<dbReference type="EMBL" id="AJ005737">
    <property type="protein sequence ID" value="CAB41521.1"/>
    <property type="molecule type" value="Genomic_DNA"/>
</dbReference>
<dbReference type="EMBL" id="AJ005738">
    <property type="protein sequence ID" value="CAB41522.1"/>
    <property type="molecule type" value="Genomic_DNA"/>
</dbReference>
<dbReference type="EMBL" id="AJ005739">
    <property type="protein sequence ID" value="CAB41523.1"/>
    <property type="molecule type" value="Genomic_DNA"/>
</dbReference>
<dbReference type="EMBL" id="AJ005740">
    <property type="protein sequence ID" value="CAB41524.1"/>
    <property type="molecule type" value="Genomic_DNA"/>
</dbReference>
<dbReference type="EMBL" id="AJ005743">
    <property type="protein sequence ID" value="CAB41669.1"/>
    <property type="molecule type" value="Genomic_DNA"/>
</dbReference>
<dbReference type="EMBL" id="AJ005744">
    <property type="protein sequence ID" value="CAB41670.1"/>
    <property type="molecule type" value="Genomic_DNA"/>
</dbReference>
<dbReference type="EMBL" id="AJ005745">
    <property type="protein sequence ID" value="CAB41671.1"/>
    <property type="molecule type" value="Genomic_DNA"/>
</dbReference>
<dbReference type="EMBL" id="AJ005746">
    <property type="protein sequence ID" value="CAB41696.1"/>
    <property type="molecule type" value="Genomic_DNA"/>
</dbReference>
<dbReference type="EMBL" id="AJ005747">
    <property type="protein sequence ID" value="CAB41672.1"/>
    <property type="molecule type" value="Genomic_DNA"/>
</dbReference>
<dbReference type="EMBL" id="AJ005748">
    <property type="protein sequence ID" value="CAB41673.1"/>
    <property type="molecule type" value="Genomic_DNA"/>
</dbReference>
<dbReference type="EMBL" id="AJ005749">
    <property type="protein sequence ID" value="CAB41674.1"/>
    <property type="molecule type" value="Genomic_DNA"/>
</dbReference>
<dbReference type="EMBL" id="AJ005750">
    <property type="protein sequence ID" value="CAB41675.1"/>
    <property type="molecule type" value="Genomic_DNA"/>
</dbReference>
<dbReference type="EMBL" id="AJ005751">
    <property type="protein sequence ID" value="CAB41676.1"/>
    <property type="molecule type" value="Genomic_DNA"/>
</dbReference>
<dbReference type="EMBL" id="AJ005752">
    <property type="protein sequence ID" value="CAB41677.1"/>
    <property type="molecule type" value="Genomic_DNA"/>
</dbReference>
<dbReference type="EMBL" id="AJ005753">
    <property type="protein sequence ID" value="CAB41678.1"/>
    <property type="molecule type" value="Genomic_DNA"/>
</dbReference>
<dbReference type="EMBL" id="AJ005755">
    <property type="protein sequence ID" value="CAB41679.1"/>
    <property type="molecule type" value="Genomic_DNA"/>
</dbReference>
<dbReference type="EMBL" id="AJ238722">
    <property type="protein sequence ID" value="CAB91077.1"/>
    <property type="molecule type" value="Genomic_DNA"/>
</dbReference>
<dbReference type="EMBL" id="AJ238719">
    <property type="protein sequence ID" value="CAB91074.1"/>
    <property type="molecule type" value="Genomic_DNA"/>
</dbReference>
<dbReference type="EMBL" id="AJ238720">
    <property type="protein sequence ID" value="CAB91075.1"/>
    <property type="molecule type" value="Genomic_DNA"/>
</dbReference>
<dbReference type="EMBL" id="AJ238721">
    <property type="protein sequence ID" value="CAB91076.1"/>
    <property type="molecule type" value="Genomic_DNA"/>
</dbReference>
<dbReference type="PIR" id="H65065">
    <property type="entry name" value="MVECMH"/>
</dbReference>
<dbReference type="RefSeq" id="NP_417308.1">
    <property type="nucleotide sequence ID" value="NC_000913.3"/>
</dbReference>
<dbReference type="RefSeq" id="WP_000082201.1">
    <property type="nucleotide sequence ID" value="NZ_SSUV01000026.1"/>
</dbReference>
<dbReference type="PDB" id="1AZO">
    <property type="method" value="X-ray"/>
    <property type="resolution" value="1.70 A"/>
    <property type="chains" value="A=1-229"/>
</dbReference>
<dbReference type="PDB" id="2AZO">
    <property type="method" value="X-ray"/>
    <property type="resolution" value="2.30 A"/>
    <property type="chains" value="A/B=1-229"/>
</dbReference>
<dbReference type="PDBsum" id="1AZO"/>
<dbReference type="PDBsum" id="2AZO"/>
<dbReference type="SMR" id="P06722"/>
<dbReference type="BioGRID" id="4263275">
    <property type="interactions" value="204"/>
</dbReference>
<dbReference type="BioGRID" id="851627">
    <property type="interactions" value="1"/>
</dbReference>
<dbReference type="ComplexPortal" id="CPX-5541">
    <property type="entry name" value="MutHLS methyl-directed mismatch repair complex"/>
</dbReference>
<dbReference type="DIP" id="DIP-10284N"/>
<dbReference type="FunCoup" id="P06722">
    <property type="interactions" value="56"/>
</dbReference>
<dbReference type="IntAct" id="P06722">
    <property type="interactions" value="10"/>
</dbReference>
<dbReference type="STRING" id="511145.b2831"/>
<dbReference type="PaxDb" id="511145-b2831"/>
<dbReference type="EnsemblBacteria" id="AAC75870">
    <property type="protein sequence ID" value="AAC75870"/>
    <property type="gene ID" value="b2831"/>
</dbReference>
<dbReference type="GeneID" id="947299"/>
<dbReference type="KEGG" id="ecj:JW2799"/>
<dbReference type="KEGG" id="eco:b2831"/>
<dbReference type="KEGG" id="ecoc:C3026_15550"/>
<dbReference type="PATRIC" id="fig|1411691.4.peg.3903"/>
<dbReference type="EchoBASE" id="EB0619"/>
<dbReference type="eggNOG" id="COG3066">
    <property type="taxonomic scope" value="Bacteria"/>
</dbReference>
<dbReference type="HOGENOM" id="CLU_086669_0_0_6"/>
<dbReference type="InParanoid" id="P06722"/>
<dbReference type="OMA" id="WEELMDY"/>
<dbReference type="OrthoDB" id="5634909at2"/>
<dbReference type="PhylomeDB" id="P06722"/>
<dbReference type="BioCyc" id="EcoCyc:EG10624-MONOMER"/>
<dbReference type="BioCyc" id="MetaCyc:EG10624-MONOMER"/>
<dbReference type="EvolutionaryTrace" id="P06722"/>
<dbReference type="PRO" id="PR:P06722"/>
<dbReference type="Proteomes" id="UP000000625">
    <property type="component" value="Chromosome"/>
</dbReference>
<dbReference type="GO" id="GO:0005737">
    <property type="term" value="C:cytoplasm"/>
    <property type="evidence" value="ECO:0007669"/>
    <property type="project" value="UniProtKB-SubCell"/>
</dbReference>
<dbReference type="GO" id="GO:0032300">
    <property type="term" value="C:mismatch repair complex"/>
    <property type="evidence" value="ECO:0000303"/>
    <property type="project" value="ComplexPortal"/>
</dbReference>
<dbReference type="GO" id="GO:0003677">
    <property type="term" value="F:DNA binding"/>
    <property type="evidence" value="ECO:0000314"/>
    <property type="project" value="EcoliWiki"/>
</dbReference>
<dbReference type="GO" id="GO:0004519">
    <property type="term" value="F:endonuclease activity"/>
    <property type="evidence" value="ECO:0000314"/>
    <property type="project" value="EcoliWiki"/>
</dbReference>
<dbReference type="GO" id="GO:0043765">
    <property type="term" value="F:T/G mismatch-specific endonuclease activity"/>
    <property type="evidence" value="ECO:0000314"/>
    <property type="project" value="EcoliWiki"/>
</dbReference>
<dbReference type="GO" id="GO:0006304">
    <property type="term" value="P:DNA modification"/>
    <property type="evidence" value="ECO:0007669"/>
    <property type="project" value="InterPro"/>
</dbReference>
<dbReference type="GO" id="GO:0006298">
    <property type="term" value="P:mismatch repair"/>
    <property type="evidence" value="ECO:0000314"/>
    <property type="project" value="EcoCyc"/>
</dbReference>
<dbReference type="GO" id="GO:0000018">
    <property type="term" value="P:regulation of DNA recombination"/>
    <property type="evidence" value="ECO:0000315"/>
    <property type="project" value="EcoliWiki"/>
</dbReference>
<dbReference type="CDD" id="cd00583">
    <property type="entry name" value="MutH-like"/>
    <property type="match status" value="1"/>
</dbReference>
<dbReference type="FunFam" id="3.40.600.10:FF:000001">
    <property type="entry name" value="DNA mismatch repair protein MutH"/>
    <property type="match status" value="1"/>
</dbReference>
<dbReference type="Gene3D" id="3.40.600.10">
    <property type="entry name" value="DNA mismatch repair MutH/Restriction endonuclease, type II"/>
    <property type="match status" value="1"/>
</dbReference>
<dbReference type="HAMAP" id="MF_00759">
    <property type="entry name" value="MutH"/>
    <property type="match status" value="1"/>
</dbReference>
<dbReference type="InterPro" id="IPR004230">
    <property type="entry name" value="DNA_mismatch_repair_MutH"/>
</dbReference>
<dbReference type="InterPro" id="IPR011337">
    <property type="entry name" value="DNA_rep_MutH/RE_typeII_Sau3AI"/>
</dbReference>
<dbReference type="InterPro" id="IPR037057">
    <property type="entry name" value="DNA_rep_MutH/T2_RE_sf"/>
</dbReference>
<dbReference type="InterPro" id="IPR011335">
    <property type="entry name" value="Restrct_endonuc-II-like"/>
</dbReference>
<dbReference type="NCBIfam" id="TIGR02248">
    <property type="entry name" value="mutH_TIGR"/>
    <property type="match status" value="1"/>
</dbReference>
<dbReference type="NCBIfam" id="NF003458">
    <property type="entry name" value="PRK05070.1"/>
    <property type="match status" value="1"/>
</dbReference>
<dbReference type="Pfam" id="PF02976">
    <property type="entry name" value="MutH"/>
    <property type="match status" value="1"/>
</dbReference>
<dbReference type="SMART" id="SM00927">
    <property type="entry name" value="MutH"/>
    <property type="match status" value="1"/>
</dbReference>
<dbReference type="SUPFAM" id="SSF52980">
    <property type="entry name" value="Restriction endonuclease-like"/>
    <property type="match status" value="1"/>
</dbReference>
<name>MUTH_ECOLI</name>
<reference key="1">
    <citation type="journal article" date="1987" name="Nucleic Acids Res.">
        <title>Nucleotide sequence of the Escherichia coli mutH gene.</title>
        <authorList>
            <person name="Grafstrom R.H."/>
            <person name="Hoess R.H."/>
        </authorList>
    </citation>
    <scope>NUCLEOTIDE SEQUENCE [GENOMIC DNA]</scope>
    <scope>PROTEIN SEQUENCE OF 2-25</scope>
    <scope>MUTANTS TS7 AND TS28</scope>
    <source>
        <strain>K12</strain>
    </source>
</reference>
<reference key="2">
    <citation type="submission" date="1994-10" db="EMBL/GenBank/DDBJ databases">
        <authorList>
            <person name="Feng G."/>
            <person name="Tsui H.T."/>
            <person name="Winkler M.E."/>
            <person name="Loh T.A."/>
            <person name="Marinus M.G."/>
        </authorList>
    </citation>
    <scope>SEQUENCE REVISION TO 83; 130-131 AND 136</scope>
    <source>
        <strain>K12</strain>
    </source>
</reference>
<reference key="3">
    <citation type="journal article" date="1997" name="Science">
        <title>The complete genome sequence of Escherichia coli K-12.</title>
        <authorList>
            <person name="Blattner F.R."/>
            <person name="Plunkett G. III"/>
            <person name="Bloch C.A."/>
            <person name="Perna N.T."/>
            <person name="Burland V."/>
            <person name="Riley M."/>
            <person name="Collado-Vides J."/>
            <person name="Glasner J.D."/>
            <person name="Rode C.K."/>
            <person name="Mayhew G.F."/>
            <person name="Gregor J."/>
            <person name="Davis N.W."/>
            <person name="Kirkpatrick H.A."/>
            <person name="Goeden M.A."/>
            <person name="Rose D.J."/>
            <person name="Mau B."/>
            <person name="Shao Y."/>
        </authorList>
    </citation>
    <scope>NUCLEOTIDE SEQUENCE [LARGE SCALE GENOMIC DNA]</scope>
    <source>
        <strain>K12 / MG1655 / ATCC 47076</strain>
    </source>
</reference>
<reference key="4">
    <citation type="journal article" date="2006" name="Mol. Syst. Biol.">
        <title>Highly accurate genome sequences of Escherichia coli K-12 strains MG1655 and W3110.</title>
        <authorList>
            <person name="Hayashi K."/>
            <person name="Morooka N."/>
            <person name="Yamamoto Y."/>
            <person name="Fujita K."/>
            <person name="Isono K."/>
            <person name="Choi S."/>
            <person name="Ohtsubo E."/>
            <person name="Baba T."/>
            <person name="Wanner B.L."/>
            <person name="Mori H."/>
            <person name="Horiuchi T."/>
        </authorList>
    </citation>
    <scope>NUCLEOTIDE SEQUENCE [LARGE SCALE GENOMIC DNA]</scope>
    <source>
        <strain>K12 / W3110 / ATCC 27325 / DSM 5911</strain>
    </source>
</reference>
<reference key="5">
    <citation type="submission" date="1999-05" db="EMBL/GenBank/DDBJ databases">
        <authorList>
            <person name="Denamur E."/>
        </authorList>
    </citation>
    <scope>NUCLEOTIDE SEQUENCE [GENOMIC DNA] OF 58-157</scope>
    <source>
        <strain>ECOR 1</strain>
        <strain>ECOR 10</strain>
        <strain>ECOR 13</strain>
        <strain>ECOR 17</strain>
        <strain>ECOR 20</strain>
        <strain>ECOR 23</strain>
        <strain>ECOR 24</strain>
        <strain>ECOR 26</strain>
        <strain>ECOR 34</strain>
        <strain>ECOR 35</strain>
        <strain>ECOR 37</strain>
        <strain>ECOR 4</strain>
        <strain>ECOR 40</strain>
        <strain>ECOR 41</strain>
        <strain>ECOR 45</strain>
        <strain>ECOR 47</strain>
        <strain>ECOR 49</strain>
        <strain>ECOR 51</strain>
        <strain>ECOR 52</strain>
        <strain>ECOR 57</strain>
        <strain>ECOR 58</strain>
        <strain>ECOR 59</strain>
        <strain>ECOR 62</strain>
        <strain>ECOR 64</strain>
        <strain>ECOR 67</strain>
        <strain>ECOR 68</strain>
        <strain>ECOR 70</strain>
        <strain>O2:HN / ECOR 50 / P97 / UPEC</strain>
    </source>
</reference>
<reference key="6">
    <citation type="journal article" date="1998" name="EMBO J.">
        <title>Structural basis for MutH activation in E.coli mismatch repair and relationship of MutH to restriction endonucleases.</title>
        <authorList>
            <person name="Ban C."/>
            <person name="Yang W."/>
        </authorList>
    </citation>
    <scope>X-RAY CRYSTALLOGRAPHY (1.7 ANGSTROMS)</scope>
</reference>
<protein>
    <recommendedName>
        <fullName evidence="1">DNA mismatch repair protein MutH</fullName>
    </recommendedName>
    <alternativeName>
        <fullName evidence="1">Methyl-directed mismatch repair protein</fullName>
    </alternativeName>
</protein>
<organism>
    <name type="scientific">Escherichia coli (strain K12)</name>
    <dbReference type="NCBI Taxonomy" id="83333"/>
    <lineage>
        <taxon>Bacteria</taxon>
        <taxon>Pseudomonadati</taxon>
        <taxon>Pseudomonadota</taxon>
        <taxon>Gammaproteobacteria</taxon>
        <taxon>Enterobacterales</taxon>
        <taxon>Enterobacteriaceae</taxon>
        <taxon>Escherichia</taxon>
    </lineage>
</organism>
<accession>P06722</accession>
<accession>Q2MA06</accession>
<accession>Q9R2X2</accession>
<accession>Q9R3A8</accession>
<accession>Q9R411</accession>
<accession>Q9S6P5</accession>
<accession>Q9S6P6</accession>
<accession>Q9S6P7</accession>
<sequence length="229" mass="25527">MSQPRPLLSPPETEEQLLAQAQQLSGYTLGELAALVGLVTPENLKRDKGWIGVLLEIWLGASAGSKPEQDFAALGVELKTIPVDSLGRPLETTFVCVAPLTGNSGVTWETSHVRHKLKRVLWIPVEGERSIPLAQRRVGSPLLWSPNEEEDRQLREDWEELMDMIVLGQVERITARHGEYLQIRPKAANAKALTEAIGARGERILTLPRGFYLKKNFTSALLARHFLIQ</sequence>
<feature type="initiator methionine" description="Removed" evidence="2">
    <location>
        <position position="1"/>
    </location>
</feature>
<feature type="chain" id="PRO_0000198665" description="DNA mismatch repair protein MutH">
    <location>
        <begin position="2"/>
        <end position="229"/>
    </location>
</feature>
<feature type="sequence variant" description="In strain: ECOR 67.">
    <original>W</original>
    <variation>S</variation>
    <location>
        <position position="58"/>
    </location>
</feature>
<feature type="sequence variant" description="In strain: ECOR 13, ECOR 20, ECOR 26 and ECOR 70.">
    <original>G</original>
    <variation>C</variation>
    <location>
        <position position="60"/>
    </location>
</feature>
<feature type="sequence variant" description="In strain: ECOR 50.">
    <original>G</original>
    <variation>R</variation>
    <location>
        <position position="64"/>
    </location>
</feature>
<feature type="sequence variant" description="In strain: ECOR 51, ECOR 52, ECOR 57, ECOR 59, ECOR 62 and ECOR 64.">
    <original>Q</original>
    <variation>K</variation>
    <location>
        <position position="135"/>
    </location>
</feature>
<feature type="sequence variant" description="In strain: ECOR 67.">
    <original>Q</original>
    <variation>R</variation>
    <location>
        <position position="153"/>
    </location>
</feature>
<feature type="sequence variant" description="In strain: ECOR 35.">
    <original>R</original>
    <variation>C</variation>
    <location>
        <position position="155"/>
    </location>
</feature>
<feature type="mutagenesis site" description="In TS7; temperature-sensitive.">
    <original>T</original>
    <variation>L</variation>
    <location>
        <position position="28"/>
    </location>
</feature>
<feature type="mutagenesis site" description="In TS28; temperature-sensitive.">
    <original>D</original>
    <variation>N</variation>
    <location>
        <position position="157"/>
    </location>
</feature>
<feature type="helix" evidence="3">
    <location>
        <begin position="14"/>
        <end position="23"/>
    </location>
</feature>
<feature type="turn" evidence="3">
    <location>
        <begin position="24"/>
        <end position="26"/>
    </location>
</feature>
<feature type="helix" evidence="3">
    <location>
        <begin position="29"/>
        <end position="35"/>
    </location>
</feature>
<feature type="turn" evidence="3">
    <location>
        <begin position="44"/>
        <end position="46"/>
    </location>
</feature>
<feature type="helix" evidence="3">
    <location>
        <begin position="50"/>
        <end position="58"/>
    </location>
</feature>
<feature type="helix" evidence="3">
    <location>
        <begin position="69"/>
        <end position="72"/>
    </location>
</feature>
<feature type="strand" evidence="3">
    <location>
        <begin position="77"/>
        <end position="83"/>
    </location>
</feature>
<feature type="strand" evidence="3">
    <location>
        <begin position="93"/>
        <end position="97"/>
    </location>
</feature>
<feature type="strand" evidence="3">
    <location>
        <begin position="100"/>
        <end position="102"/>
    </location>
</feature>
<feature type="turn" evidence="3">
    <location>
        <begin position="108"/>
        <end position="110"/>
    </location>
</feature>
<feature type="helix" evidence="3">
    <location>
        <begin position="112"/>
        <end position="116"/>
    </location>
</feature>
<feature type="strand" evidence="3">
    <location>
        <begin position="118"/>
        <end position="126"/>
    </location>
</feature>
<feature type="helix" evidence="3">
    <location>
        <begin position="133"/>
        <end position="135"/>
    </location>
</feature>
<feature type="strand" evidence="3">
    <location>
        <begin position="142"/>
        <end position="144"/>
    </location>
</feature>
<feature type="helix" evidence="3">
    <location>
        <begin position="148"/>
        <end position="166"/>
    </location>
</feature>
<feature type="helix" evidence="3">
    <location>
        <begin position="170"/>
        <end position="172"/>
    </location>
</feature>
<feature type="strand" evidence="3">
    <location>
        <begin position="179"/>
        <end position="184"/>
    </location>
</feature>
<feature type="strand" evidence="3">
    <location>
        <begin position="194"/>
        <end position="197"/>
    </location>
</feature>
<feature type="strand" evidence="3">
    <location>
        <begin position="203"/>
        <end position="206"/>
    </location>
</feature>
<feature type="strand" evidence="3">
    <location>
        <begin position="210"/>
        <end position="213"/>
    </location>
</feature>
<feature type="helix" evidence="3">
    <location>
        <begin position="215"/>
        <end position="224"/>
    </location>
</feature>
<keyword id="KW-0002">3D-structure</keyword>
<keyword id="KW-0963">Cytoplasm</keyword>
<keyword id="KW-0903">Direct protein sequencing</keyword>
<keyword id="KW-0227">DNA damage</keyword>
<keyword id="KW-0234">DNA repair</keyword>
<keyword id="KW-0255">Endonuclease</keyword>
<keyword id="KW-0378">Hydrolase</keyword>
<keyword id="KW-0540">Nuclease</keyword>
<keyword id="KW-1185">Reference proteome</keyword>
<gene>
    <name evidence="1" type="primary">mutH</name>
    <name type="synonym">mutR</name>
    <name type="synonym">prv</name>
    <name type="ordered locus">b2831</name>
    <name type="ordered locus">JW2799</name>
</gene>
<proteinExistence type="evidence at protein level"/>
<comment type="function">
    <text>Sequence-specific endonuclease that cleaves unmethylated GATC sequences. It is involved in DNA mismatch repair.</text>
</comment>
<comment type="interaction">
    <interactant intactId="EBI-545170">
        <id>P06722</id>
    </interactant>
    <interactant intactId="EBI-545161">
        <id>P76217</id>
        <label>astD</label>
    </interactant>
    <organismsDiffer>false</organismsDiffer>
    <experiments>2</experiments>
</comment>
<comment type="interaction">
    <interactant intactId="EBI-545170">
        <id>P06722</id>
    </interactant>
    <interactant intactId="EBI-554913">
        <id>P23367</id>
        <label>mutL</label>
    </interactant>
    <organismsDiffer>false</organismsDiffer>
    <experiments>8</experiments>
</comment>
<comment type="subcellular location">
    <subcellularLocation>
        <location>Cytoplasm</location>
    </subcellularLocation>
</comment>
<comment type="similarity">
    <text evidence="1">Belongs to the MutH family.</text>
</comment>
<evidence type="ECO:0000255" key="1">
    <source>
        <dbReference type="HAMAP-Rule" id="MF_00759"/>
    </source>
</evidence>
<evidence type="ECO:0000269" key="2">
    <source>
    </source>
</evidence>
<evidence type="ECO:0007829" key="3">
    <source>
        <dbReference type="PDB" id="1AZO"/>
    </source>
</evidence>